<gene>
    <name type="primary">SELE</name>
</gene>
<dbReference type="EMBL" id="AF307972">
    <property type="protein sequence ID" value="AAK48712.1"/>
    <property type="molecule type" value="mRNA"/>
</dbReference>
<dbReference type="RefSeq" id="NP_001075324.1">
    <property type="nucleotide sequence ID" value="NM_001081855.2"/>
</dbReference>
<dbReference type="SMR" id="Q95LG1"/>
<dbReference type="FunCoup" id="Q95LG1">
    <property type="interactions" value="64"/>
</dbReference>
<dbReference type="STRING" id="9796.ENSECAP00000006957"/>
<dbReference type="GlyCosmos" id="Q95LG1">
    <property type="glycosylation" value="9 sites, No reported glycans"/>
</dbReference>
<dbReference type="PaxDb" id="9796-ENSECAP00000006957"/>
<dbReference type="GeneID" id="100033910"/>
<dbReference type="KEGG" id="ecb:100033910"/>
<dbReference type="CTD" id="6401"/>
<dbReference type="InParanoid" id="Q95LG1"/>
<dbReference type="OrthoDB" id="406096at2759"/>
<dbReference type="Proteomes" id="UP000002281">
    <property type="component" value="Unplaced"/>
</dbReference>
<dbReference type="GO" id="GO:0009897">
    <property type="term" value="C:external side of plasma membrane"/>
    <property type="evidence" value="ECO:0000318"/>
    <property type="project" value="GO_Central"/>
</dbReference>
<dbReference type="GO" id="GO:0005615">
    <property type="term" value="C:extracellular space"/>
    <property type="evidence" value="ECO:0000318"/>
    <property type="project" value="GO_Central"/>
</dbReference>
<dbReference type="GO" id="GO:0005509">
    <property type="term" value="F:calcium ion binding"/>
    <property type="evidence" value="ECO:0007669"/>
    <property type="project" value="InterPro"/>
</dbReference>
<dbReference type="GO" id="GO:0070492">
    <property type="term" value="F:oligosaccharide binding"/>
    <property type="evidence" value="ECO:0000318"/>
    <property type="project" value="GO_Central"/>
</dbReference>
<dbReference type="GO" id="GO:0033691">
    <property type="term" value="F:sialic acid binding"/>
    <property type="evidence" value="ECO:0000318"/>
    <property type="project" value="GO_Central"/>
</dbReference>
<dbReference type="GO" id="GO:0007157">
    <property type="term" value="P:heterophilic cell-cell adhesion via plasma membrane cell adhesion molecules"/>
    <property type="evidence" value="ECO:0000318"/>
    <property type="project" value="GO_Central"/>
</dbReference>
<dbReference type="GO" id="GO:0050901">
    <property type="term" value="P:leukocyte tethering or rolling"/>
    <property type="evidence" value="ECO:0000318"/>
    <property type="project" value="GO_Central"/>
</dbReference>
<dbReference type="GO" id="GO:1903238">
    <property type="term" value="P:positive regulation of leukocyte tethering or rolling"/>
    <property type="evidence" value="ECO:0000250"/>
    <property type="project" value="UniProtKB"/>
</dbReference>
<dbReference type="GO" id="GO:0034097">
    <property type="term" value="P:response to cytokine"/>
    <property type="evidence" value="ECO:0000318"/>
    <property type="project" value="GO_Central"/>
</dbReference>
<dbReference type="CDD" id="cd00033">
    <property type="entry name" value="CCP"/>
    <property type="match status" value="6"/>
</dbReference>
<dbReference type="CDD" id="cd03592">
    <property type="entry name" value="CLECT_selectins_like"/>
    <property type="match status" value="1"/>
</dbReference>
<dbReference type="CDD" id="cd00054">
    <property type="entry name" value="EGF_CA"/>
    <property type="match status" value="1"/>
</dbReference>
<dbReference type="FunFam" id="3.10.100.10:FF:000007">
    <property type="entry name" value="L-selectin"/>
    <property type="match status" value="1"/>
</dbReference>
<dbReference type="FunFam" id="2.10.25.10:FF:000176">
    <property type="entry name" value="Selectin P"/>
    <property type="match status" value="1"/>
</dbReference>
<dbReference type="FunFam" id="2.10.70.10:FF:000001">
    <property type="entry name" value="Selectin P"/>
    <property type="match status" value="5"/>
</dbReference>
<dbReference type="Gene3D" id="2.10.70.10">
    <property type="entry name" value="Complement Module, domain 1"/>
    <property type="match status" value="6"/>
</dbReference>
<dbReference type="Gene3D" id="3.10.100.10">
    <property type="entry name" value="Mannose-Binding Protein A, subunit A"/>
    <property type="match status" value="1"/>
</dbReference>
<dbReference type="InterPro" id="IPR001304">
    <property type="entry name" value="C-type_lectin-like"/>
</dbReference>
<dbReference type="InterPro" id="IPR016186">
    <property type="entry name" value="C-type_lectin-like/link_sf"/>
</dbReference>
<dbReference type="InterPro" id="IPR018378">
    <property type="entry name" value="C-type_lectin_CS"/>
</dbReference>
<dbReference type="InterPro" id="IPR050350">
    <property type="entry name" value="Compl-Cell_Adhes-Reg"/>
</dbReference>
<dbReference type="InterPro" id="IPR016187">
    <property type="entry name" value="CTDL_fold"/>
</dbReference>
<dbReference type="InterPro" id="IPR001881">
    <property type="entry name" value="EGF-like_Ca-bd_dom"/>
</dbReference>
<dbReference type="InterPro" id="IPR000742">
    <property type="entry name" value="EGF-like_dom"/>
</dbReference>
<dbReference type="InterPro" id="IPR033991">
    <property type="entry name" value="Selectin_CTLD"/>
</dbReference>
<dbReference type="InterPro" id="IPR002396">
    <property type="entry name" value="Selectin_superfamily"/>
</dbReference>
<dbReference type="InterPro" id="IPR035976">
    <property type="entry name" value="Sushi/SCR/CCP_sf"/>
</dbReference>
<dbReference type="InterPro" id="IPR000436">
    <property type="entry name" value="Sushi_SCR_CCP_dom"/>
</dbReference>
<dbReference type="PANTHER" id="PTHR19325">
    <property type="entry name" value="COMPLEMENT COMPONENT-RELATED SUSHI DOMAIN-CONTAINING"/>
    <property type="match status" value="1"/>
</dbReference>
<dbReference type="PANTHER" id="PTHR19325:SF493">
    <property type="entry name" value="E-SELECTIN"/>
    <property type="match status" value="1"/>
</dbReference>
<dbReference type="Pfam" id="PF00008">
    <property type="entry name" value="EGF"/>
    <property type="match status" value="1"/>
</dbReference>
<dbReference type="Pfam" id="PF00059">
    <property type="entry name" value="Lectin_C"/>
    <property type="match status" value="1"/>
</dbReference>
<dbReference type="Pfam" id="PF00084">
    <property type="entry name" value="Sushi"/>
    <property type="match status" value="6"/>
</dbReference>
<dbReference type="PRINTS" id="PR00343">
    <property type="entry name" value="SELECTIN"/>
</dbReference>
<dbReference type="SMART" id="SM00032">
    <property type="entry name" value="CCP"/>
    <property type="match status" value="6"/>
</dbReference>
<dbReference type="SMART" id="SM00034">
    <property type="entry name" value="CLECT"/>
    <property type="match status" value="1"/>
</dbReference>
<dbReference type="SMART" id="SM00181">
    <property type="entry name" value="EGF"/>
    <property type="match status" value="2"/>
</dbReference>
<dbReference type="SMART" id="SM00179">
    <property type="entry name" value="EGF_CA"/>
    <property type="match status" value="1"/>
</dbReference>
<dbReference type="SUPFAM" id="SSF56436">
    <property type="entry name" value="C-type lectin-like"/>
    <property type="match status" value="1"/>
</dbReference>
<dbReference type="SUPFAM" id="SSF57535">
    <property type="entry name" value="Complement control module/SCR domain"/>
    <property type="match status" value="6"/>
</dbReference>
<dbReference type="PROSITE" id="PS00615">
    <property type="entry name" value="C_TYPE_LECTIN_1"/>
    <property type="match status" value="1"/>
</dbReference>
<dbReference type="PROSITE" id="PS50041">
    <property type="entry name" value="C_TYPE_LECTIN_2"/>
    <property type="match status" value="1"/>
</dbReference>
<dbReference type="PROSITE" id="PS00022">
    <property type="entry name" value="EGF_1"/>
    <property type="match status" value="1"/>
</dbReference>
<dbReference type="PROSITE" id="PS01186">
    <property type="entry name" value="EGF_2"/>
    <property type="match status" value="1"/>
</dbReference>
<dbReference type="PROSITE" id="PS50026">
    <property type="entry name" value="EGF_3"/>
    <property type="match status" value="1"/>
</dbReference>
<dbReference type="PROSITE" id="PS50923">
    <property type="entry name" value="SUSHI"/>
    <property type="match status" value="6"/>
</dbReference>
<accession>Q95LG1</accession>
<protein>
    <recommendedName>
        <fullName>E-selectin</fullName>
    </recommendedName>
    <alternativeName>
        <fullName>CD62 antigen-like family member E</fullName>
    </alternativeName>
    <alternativeName>
        <fullName>Endothelial leukocyte adhesion molecule 1</fullName>
        <shortName>ELAM-1</shortName>
    </alternativeName>
    <alternativeName>
        <fullName>Leukocyte-endothelial cell adhesion molecule 2</fullName>
        <shortName>LECAM2</shortName>
    </alternativeName>
    <cdAntigenName>CD62E</cdAntigenName>
</protein>
<feature type="signal peptide" evidence="1">
    <location>
        <begin position="1"/>
        <end position="21"/>
    </location>
</feature>
<feature type="chain" id="PRO_0000017491" description="E-selectin">
    <location>
        <begin position="22"/>
        <end position="610"/>
    </location>
</feature>
<feature type="topological domain" description="Extracellular" evidence="3">
    <location>
        <begin position="22"/>
        <end position="555"/>
    </location>
</feature>
<feature type="transmembrane region" description="Helical" evidence="3">
    <location>
        <begin position="556"/>
        <end position="577"/>
    </location>
</feature>
<feature type="topological domain" description="Cytoplasmic" evidence="3">
    <location>
        <begin position="578"/>
        <end position="610"/>
    </location>
</feature>
<feature type="domain" description="C-type lectin" evidence="4">
    <location>
        <begin position="22"/>
        <end position="138"/>
    </location>
</feature>
<feature type="domain" description="EGF-like" evidence="5">
    <location>
        <begin position="139"/>
        <end position="174"/>
    </location>
</feature>
<feature type="domain" description="Sushi 1" evidence="6">
    <location>
        <begin position="177"/>
        <end position="238"/>
    </location>
</feature>
<feature type="domain" description="Sushi 2" evidence="6">
    <location>
        <begin position="239"/>
        <end position="300"/>
    </location>
</feature>
<feature type="domain" description="Sushi 3" evidence="6">
    <location>
        <begin position="314"/>
        <end position="363"/>
    </location>
</feature>
<feature type="domain" description="Sushi 4" evidence="6">
    <location>
        <begin position="365"/>
        <end position="426"/>
    </location>
</feature>
<feature type="domain" description="Sushi 5" evidence="6">
    <location>
        <begin position="428"/>
        <end position="489"/>
    </location>
</feature>
<feature type="domain" description="Sushi 6" evidence="6">
    <location>
        <begin position="490"/>
        <end position="548"/>
    </location>
</feature>
<feature type="binding site" evidence="2">
    <location>
        <begin position="101"/>
        <end position="108"/>
    </location>
    <ligand>
        <name>a carbohydrate</name>
        <dbReference type="ChEBI" id="CHEBI:16646"/>
    </ligand>
</feature>
<feature type="binding site" evidence="2">
    <location>
        <position position="101"/>
    </location>
    <ligand>
        <name>Ca(2+)</name>
        <dbReference type="ChEBI" id="CHEBI:29108"/>
    </ligand>
</feature>
<feature type="binding site" evidence="2">
    <location>
        <position position="103"/>
    </location>
    <ligand>
        <name>Ca(2+)</name>
        <dbReference type="ChEBI" id="CHEBI:29108"/>
    </ligand>
</feature>
<feature type="binding site" evidence="2">
    <location>
        <position position="108"/>
    </location>
    <ligand>
        <name>Ca(2+)</name>
        <dbReference type="ChEBI" id="CHEBI:29108"/>
    </ligand>
</feature>
<feature type="binding site" evidence="2">
    <location>
        <begin position="112"/>
        <end position="117"/>
    </location>
    <ligand>
        <name>a carbohydrate</name>
        <dbReference type="ChEBI" id="CHEBI:16646"/>
    </ligand>
</feature>
<feature type="binding site" evidence="2">
    <location>
        <begin position="125"/>
        <end position="127"/>
    </location>
    <ligand>
        <name>a carbohydrate</name>
        <dbReference type="ChEBI" id="CHEBI:16646"/>
    </ligand>
</feature>
<feature type="binding site" evidence="2">
    <location>
        <position position="125"/>
    </location>
    <ligand>
        <name>Ca(2+)</name>
        <dbReference type="ChEBI" id="CHEBI:29108"/>
    </ligand>
</feature>
<feature type="binding site" evidence="2">
    <location>
        <position position="126"/>
    </location>
    <ligand>
        <name>Ca(2+)</name>
        <dbReference type="ChEBI" id="CHEBI:29108"/>
    </ligand>
</feature>
<feature type="glycosylation site" description="N-linked (GlcNAc...) asparagine" evidence="3">
    <location>
        <position position="30"/>
    </location>
</feature>
<feature type="glycosylation site" description="N-linked (GlcNAc...) asparagine" evidence="3">
    <location>
        <position position="159"/>
    </location>
</feature>
<feature type="glycosylation site" description="N-linked (GlcNAc...) asparagine" evidence="3">
    <location>
        <position position="198"/>
    </location>
</feature>
<feature type="glycosylation site" description="N-linked (GlcNAc...) asparagine" evidence="3">
    <location>
        <position position="202"/>
    </location>
</feature>
<feature type="glycosylation site" description="N-linked (GlcNAc...) asparagine" evidence="3">
    <location>
        <position position="264"/>
    </location>
</feature>
<feature type="glycosylation site" description="N-linked (GlcNAc...) asparagine" evidence="3">
    <location>
        <position position="315"/>
    </location>
</feature>
<feature type="glycosylation site" description="N-linked (GlcNAc...) asparagine" evidence="3">
    <location>
        <position position="327"/>
    </location>
</feature>
<feature type="glycosylation site" description="N-linked (GlcNAc...) asparagine" evidence="3">
    <location>
        <position position="331"/>
    </location>
</feature>
<feature type="glycosylation site" description="N-linked (GlcNAc...) asparagine" evidence="3">
    <location>
        <position position="526"/>
    </location>
</feature>
<feature type="disulfide bond" evidence="2">
    <location>
        <begin position="40"/>
        <end position="137"/>
    </location>
</feature>
<feature type="disulfide bond" evidence="2">
    <location>
        <begin position="110"/>
        <end position="129"/>
    </location>
</feature>
<feature type="disulfide bond" evidence="2">
    <location>
        <begin position="142"/>
        <end position="153"/>
    </location>
</feature>
<feature type="disulfide bond" evidence="2">
    <location>
        <begin position="147"/>
        <end position="162"/>
    </location>
</feature>
<feature type="disulfide bond" evidence="2">
    <location>
        <begin position="164"/>
        <end position="173"/>
    </location>
</feature>
<feature type="disulfide bond" evidence="2">
    <location>
        <begin position="179"/>
        <end position="223"/>
    </location>
</feature>
<feature type="disulfide bond" evidence="2">
    <location>
        <begin position="192"/>
        <end position="205"/>
    </location>
</feature>
<feature type="disulfide bond" evidence="2">
    <location>
        <begin position="209"/>
        <end position="236"/>
    </location>
</feature>
<feature type="disulfide bond" evidence="2">
    <location>
        <begin position="241"/>
        <end position="285"/>
    </location>
</feature>
<feature type="disulfide bond" evidence="2">
    <location>
        <begin position="254"/>
        <end position="267"/>
    </location>
</feature>
<feature type="disulfide bond" evidence="2">
    <location>
        <begin position="271"/>
        <end position="298"/>
    </location>
</feature>
<feature type="disulfide bond" evidence="1">
    <location>
        <begin position="303"/>
        <end position="348"/>
    </location>
</feature>
<feature type="disulfide bond" evidence="1">
    <location>
        <begin position="334"/>
        <end position="361"/>
    </location>
</feature>
<feature type="disulfide bond" evidence="1">
    <location>
        <begin position="366"/>
        <end position="411"/>
    </location>
</feature>
<feature type="disulfide bond" evidence="1">
    <location>
        <begin position="397"/>
        <end position="424"/>
    </location>
</feature>
<feature type="disulfide bond" evidence="1">
    <location>
        <begin position="429"/>
        <end position="474"/>
    </location>
</feature>
<feature type="disulfide bond" evidence="1">
    <location>
        <begin position="460"/>
        <end position="487"/>
    </location>
</feature>
<feature type="disulfide bond" evidence="1">
    <location>
        <begin position="492"/>
        <end position="533"/>
    </location>
</feature>
<feature type="disulfide bond" evidence="1">
    <location>
        <begin position="519"/>
        <end position="546"/>
    </location>
</feature>
<name>LYAM2_HORSE</name>
<sequence>MIASQFLSALTLVLLIKESGAWSYSASTTNMTFDEASAYCQQRYTHLVAIQNQEEIKYLNSIFNHSPSYYWIGIRKVNDKWVWIGTQKPLTEEAKNWAPGEPNNKQNEDCVEIYIKRYKDAGKWNDENCNKKKLALCYTAACTHTSCSGHGECVETINNYTCQCHPGFTGLRCEQVVTCQAQEAPEHGRLVCTHPLGNFSYNSSCSVSCEEGYLPSRTEAMQCTSSGEWSAPPPACHVVECDALTNPANGVMQCSQSPGSFPWNTTCTFDCQEGFELTGPQHLQCTPSGNWDNEKPTCKAVTCGAGGHPQNGFVNCSHSSAGEFTFNSSCNFTCEEGFVLQGPAQVECTAQGQWTQQVPVCKALQCKALSRPERGYMSCRPSTSGSFQSGSSCEFSCEQGFVLKGSKKLRCGPTGEWDSEKPTCEAVRCDAVRQPQGGLVRCTHSAAGEFTYKSSCAFSCEEGFELRGSAQLECTLQGQWTQEVPSCQVVQCASLAVPGKVSMSCSGEPVFGAVCTFACPEGWTLNGSAALTCGATGHWSGMLPTCEATAKSNIPLTVGLSAAGTSLLTLASFLFWLLKRLRRKAKKFVPASSYQSLQSDGSYQMPSESA</sequence>
<organism>
    <name type="scientific">Equus caballus</name>
    <name type="common">Horse</name>
    <dbReference type="NCBI Taxonomy" id="9796"/>
    <lineage>
        <taxon>Eukaryota</taxon>
        <taxon>Metazoa</taxon>
        <taxon>Chordata</taxon>
        <taxon>Craniata</taxon>
        <taxon>Vertebrata</taxon>
        <taxon>Euteleostomi</taxon>
        <taxon>Mammalia</taxon>
        <taxon>Eutheria</taxon>
        <taxon>Laurasiatheria</taxon>
        <taxon>Perissodactyla</taxon>
        <taxon>Equidae</taxon>
        <taxon>Equus</taxon>
    </lineage>
</organism>
<evidence type="ECO:0000250" key="1"/>
<evidence type="ECO:0000250" key="2">
    <source>
        <dbReference type="UniProtKB" id="P16581"/>
    </source>
</evidence>
<evidence type="ECO:0000255" key="3"/>
<evidence type="ECO:0000255" key="4">
    <source>
        <dbReference type="PROSITE-ProRule" id="PRU00040"/>
    </source>
</evidence>
<evidence type="ECO:0000255" key="5">
    <source>
        <dbReference type="PROSITE-ProRule" id="PRU00076"/>
    </source>
</evidence>
<evidence type="ECO:0000255" key="6">
    <source>
        <dbReference type="PROSITE-ProRule" id="PRU00302"/>
    </source>
</evidence>
<evidence type="ECO:0000269" key="7">
    <source>
    </source>
</evidence>
<evidence type="ECO:0000305" key="8"/>
<proteinExistence type="evidence at transcript level"/>
<reference key="1">
    <citation type="journal article" date="2001" name="Immunology">
        <title>Characterization of equine E-selectin.</title>
        <authorList>
            <person name="Hedges J.F."/>
            <person name="Demaula C.D."/>
            <person name="Moore B.D."/>
            <person name="McLaughlin B.E."/>
            <person name="Simon S.I."/>
            <person name="MacLachlan N.J."/>
        </authorList>
    </citation>
    <scope>NUCLEOTIDE SEQUENCE [MRNA]</scope>
    <scope>FUNCTION</scope>
    <scope>SUBCELLULAR LOCATION</scope>
    <scope>INDUCTION BY LIPOPOLYSACCHARIDE</scope>
</reference>
<comment type="function">
    <text evidence="2 7">Cell-surface glycoprotein having a role in immunoadhesion (PubMed:11529941). Mediates in the adhesion of blood neutrophils in cytokine-activated endothelium through interaction with SELPLG/PSGL1. May have a role in capillary morphogenesis (By similarity).</text>
</comment>
<comment type="subunit">
    <text evidence="2">Interacts with SELPLG/PSGL1 and PODXL2 through the sialyl Lewis X epitope. SELPLG sulfation appears not to be required for this interaction.</text>
</comment>
<comment type="subcellular location">
    <subcellularLocation>
        <location evidence="7">Cell membrane</location>
        <topology evidence="8">Single-pass type I membrane protein</topology>
    </subcellularLocation>
</comment>
<comment type="induction">
    <text evidence="7">Up-regulated in endothelial cells after exposure to bacterial lipopolysaccharide (LPS).</text>
</comment>
<comment type="similarity">
    <text evidence="8">Belongs to the selectin/LECAM family.</text>
</comment>
<keyword id="KW-0106">Calcium</keyword>
<keyword id="KW-0130">Cell adhesion</keyword>
<keyword id="KW-1003">Cell membrane</keyword>
<keyword id="KW-1015">Disulfide bond</keyword>
<keyword id="KW-0245">EGF-like domain</keyword>
<keyword id="KW-0325">Glycoprotein</keyword>
<keyword id="KW-0430">Lectin</keyword>
<keyword id="KW-0472">Membrane</keyword>
<keyword id="KW-0479">Metal-binding</keyword>
<keyword id="KW-1185">Reference proteome</keyword>
<keyword id="KW-0677">Repeat</keyword>
<keyword id="KW-0732">Signal</keyword>
<keyword id="KW-0768">Sushi</keyword>
<keyword id="KW-0812">Transmembrane</keyword>
<keyword id="KW-1133">Transmembrane helix</keyword>